<name>HIS8_SYNY3</name>
<sequence>MVSIRPSVRHTPAYVPGEQPQTNDFIKLNTNENPYDPPAQVLAAVAAELPKVRLYPDPVSTQLRQAAADLYGVDLNQVLAGNGSDDILNIVVRTFVDPGETVAFLDLTYSLYETIASVHGAKVQKIATDANFDLTGPVICPEAKLIFLASPNPPKGKHLNREFLWQTCAQAEGVVVIDEAYGDFSDEDHWDFLQEFDNVIISRTLSKSYSLAGMRVGLAIAAPALIEEMDKVRDSYNLDRLAQVLGTAALRNQAEFVPLWEKVRHTRTRLMEQLAELDFQVCPSDANFVFAAPRWMAAADLYQALKEKKILVRYFNHPRITDYLRITVGTDGEIDQLLLAIASLKGSLG</sequence>
<dbReference type="EC" id="2.6.1.9"/>
<dbReference type="EMBL" id="BA000022">
    <property type="protein sequence ID" value="BAA17861.1"/>
    <property type="status" value="ALT_INIT"/>
    <property type="molecule type" value="Genomic_DNA"/>
</dbReference>
<dbReference type="PIR" id="S74900">
    <property type="entry name" value="S74900"/>
</dbReference>
<dbReference type="SMR" id="P73807"/>
<dbReference type="FunCoup" id="P73807">
    <property type="interactions" value="408"/>
</dbReference>
<dbReference type="STRING" id="1148.gene:10498730"/>
<dbReference type="PaxDb" id="1148-1652943"/>
<dbReference type="EnsemblBacteria" id="BAA17861">
    <property type="protein sequence ID" value="BAA17861"/>
    <property type="gene ID" value="BAA17861"/>
</dbReference>
<dbReference type="KEGG" id="syn:sll1958"/>
<dbReference type="eggNOG" id="COG0079">
    <property type="taxonomic scope" value="Bacteria"/>
</dbReference>
<dbReference type="InParanoid" id="P73807"/>
<dbReference type="PhylomeDB" id="P73807"/>
<dbReference type="UniPathway" id="UPA00031">
    <property type="reaction ID" value="UER00012"/>
</dbReference>
<dbReference type="Proteomes" id="UP000001425">
    <property type="component" value="Chromosome"/>
</dbReference>
<dbReference type="GO" id="GO:0004400">
    <property type="term" value="F:histidinol-phosphate transaminase activity"/>
    <property type="evidence" value="ECO:0007669"/>
    <property type="project" value="UniProtKB-UniRule"/>
</dbReference>
<dbReference type="GO" id="GO:0030170">
    <property type="term" value="F:pyridoxal phosphate binding"/>
    <property type="evidence" value="ECO:0007669"/>
    <property type="project" value="InterPro"/>
</dbReference>
<dbReference type="GO" id="GO:0000105">
    <property type="term" value="P:L-histidine biosynthetic process"/>
    <property type="evidence" value="ECO:0007669"/>
    <property type="project" value="UniProtKB-UniRule"/>
</dbReference>
<dbReference type="CDD" id="cd00609">
    <property type="entry name" value="AAT_like"/>
    <property type="match status" value="1"/>
</dbReference>
<dbReference type="Gene3D" id="3.90.1150.10">
    <property type="entry name" value="Aspartate Aminotransferase, domain 1"/>
    <property type="match status" value="1"/>
</dbReference>
<dbReference type="Gene3D" id="3.40.640.10">
    <property type="entry name" value="Type I PLP-dependent aspartate aminotransferase-like (Major domain)"/>
    <property type="match status" value="1"/>
</dbReference>
<dbReference type="HAMAP" id="MF_01023">
    <property type="entry name" value="HisC_aminotrans_2"/>
    <property type="match status" value="1"/>
</dbReference>
<dbReference type="InterPro" id="IPR001917">
    <property type="entry name" value="Aminotrans_II_pyridoxalP_BS"/>
</dbReference>
<dbReference type="InterPro" id="IPR004839">
    <property type="entry name" value="Aminotransferase_I/II_large"/>
</dbReference>
<dbReference type="InterPro" id="IPR005861">
    <property type="entry name" value="HisP_aminotrans"/>
</dbReference>
<dbReference type="InterPro" id="IPR015424">
    <property type="entry name" value="PyrdxlP-dep_Trfase"/>
</dbReference>
<dbReference type="InterPro" id="IPR015421">
    <property type="entry name" value="PyrdxlP-dep_Trfase_major"/>
</dbReference>
<dbReference type="InterPro" id="IPR015422">
    <property type="entry name" value="PyrdxlP-dep_Trfase_small"/>
</dbReference>
<dbReference type="NCBIfam" id="TIGR01141">
    <property type="entry name" value="hisC"/>
    <property type="match status" value="1"/>
</dbReference>
<dbReference type="PANTHER" id="PTHR42885:SF2">
    <property type="entry name" value="HISTIDINOL-PHOSPHATE AMINOTRANSFERASE"/>
    <property type="match status" value="1"/>
</dbReference>
<dbReference type="PANTHER" id="PTHR42885">
    <property type="entry name" value="HISTIDINOL-PHOSPHATE AMINOTRANSFERASE-RELATED"/>
    <property type="match status" value="1"/>
</dbReference>
<dbReference type="Pfam" id="PF00155">
    <property type="entry name" value="Aminotran_1_2"/>
    <property type="match status" value="1"/>
</dbReference>
<dbReference type="SUPFAM" id="SSF53383">
    <property type="entry name" value="PLP-dependent transferases"/>
    <property type="match status" value="1"/>
</dbReference>
<dbReference type="PROSITE" id="PS00599">
    <property type="entry name" value="AA_TRANSFER_CLASS_2"/>
    <property type="match status" value="1"/>
</dbReference>
<protein>
    <recommendedName>
        <fullName>Histidinol-phosphate aminotransferase</fullName>
        <ecNumber>2.6.1.9</ecNumber>
    </recommendedName>
    <alternativeName>
        <fullName>Imidazole acetol-phosphate transaminase</fullName>
    </alternativeName>
</protein>
<evidence type="ECO:0000250" key="1"/>
<evidence type="ECO:0000256" key="2">
    <source>
        <dbReference type="SAM" id="MobiDB-lite"/>
    </source>
</evidence>
<evidence type="ECO:0000305" key="3"/>
<feature type="chain" id="PRO_0000153467" description="Histidinol-phosphate aminotransferase">
    <location>
        <begin position="1"/>
        <end position="349"/>
    </location>
</feature>
<feature type="region of interest" description="Disordered" evidence="2">
    <location>
        <begin position="1"/>
        <end position="22"/>
    </location>
</feature>
<feature type="modified residue" description="N6-(pyridoxal phosphate)lysine" evidence="1">
    <location>
        <position position="207"/>
    </location>
</feature>
<organism>
    <name type="scientific">Synechocystis sp. (strain ATCC 27184 / PCC 6803 / Kazusa)</name>
    <dbReference type="NCBI Taxonomy" id="1111708"/>
    <lineage>
        <taxon>Bacteria</taxon>
        <taxon>Bacillati</taxon>
        <taxon>Cyanobacteriota</taxon>
        <taxon>Cyanophyceae</taxon>
        <taxon>Synechococcales</taxon>
        <taxon>Merismopediaceae</taxon>
        <taxon>Synechocystis</taxon>
    </lineage>
</organism>
<proteinExistence type="inferred from homology"/>
<comment type="catalytic activity">
    <reaction>
        <text>L-histidinol phosphate + 2-oxoglutarate = 3-(imidazol-4-yl)-2-oxopropyl phosphate + L-glutamate</text>
        <dbReference type="Rhea" id="RHEA:23744"/>
        <dbReference type="ChEBI" id="CHEBI:16810"/>
        <dbReference type="ChEBI" id="CHEBI:29985"/>
        <dbReference type="ChEBI" id="CHEBI:57766"/>
        <dbReference type="ChEBI" id="CHEBI:57980"/>
        <dbReference type="EC" id="2.6.1.9"/>
    </reaction>
</comment>
<comment type="cofactor">
    <cofactor evidence="1">
        <name>pyridoxal 5'-phosphate</name>
        <dbReference type="ChEBI" id="CHEBI:597326"/>
    </cofactor>
</comment>
<comment type="pathway">
    <text>Amino-acid biosynthesis; L-histidine biosynthesis; L-histidine from 5-phospho-alpha-D-ribose 1-diphosphate: step 7/9.</text>
</comment>
<comment type="subunit">
    <text evidence="1">Homodimer.</text>
</comment>
<comment type="similarity">
    <text evidence="3">Belongs to the class-II pyridoxal-phosphate-dependent aminotransferase family. Histidinol-phosphate aminotransferase subfamily.</text>
</comment>
<comment type="sequence caution" evidence="3">
    <conflict type="erroneous initiation">
        <sequence resource="EMBL-CDS" id="BAA17861"/>
    </conflict>
</comment>
<gene>
    <name type="primary">hisC</name>
    <name type="ordered locus">sll1958</name>
</gene>
<reference key="1">
    <citation type="journal article" date="1996" name="DNA Res.">
        <title>Sequence analysis of the genome of the unicellular cyanobacterium Synechocystis sp. strain PCC6803. II. Sequence determination of the entire genome and assignment of potential protein-coding regions.</title>
        <authorList>
            <person name="Kaneko T."/>
            <person name="Sato S."/>
            <person name="Kotani H."/>
            <person name="Tanaka A."/>
            <person name="Asamizu E."/>
            <person name="Nakamura Y."/>
            <person name="Miyajima N."/>
            <person name="Hirosawa M."/>
            <person name="Sugiura M."/>
            <person name="Sasamoto S."/>
            <person name="Kimura T."/>
            <person name="Hosouchi T."/>
            <person name="Matsuno A."/>
            <person name="Muraki A."/>
            <person name="Nakazaki N."/>
            <person name="Naruo K."/>
            <person name="Okumura S."/>
            <person name="Shimpo S."/>
            <person name="Takeuchi C."/>
            <person name="Wada T."/>
            <person name="Watanabe A."/>
            <person name="Yamada M."/>
            <person name="Yasuda M."/>
            <person name="Tabata S."/>
        </authorList>
    </citation>
    <scope>NUCLEOTIDE SEQUENCE [LARGE SCALE GENOMIC DNA]</scope>
    <source>
        <strain>ATCC 27184 / PCC 6803 / Kazusa</strain>
    </source>
</reference>
<accession>P73807</accession>
<keyword id="KW-0028">Amino-acid biosynthesis</keyword>
<keyword id="KW-0032">Aminotransferase</keyword>
<keyword id="KW-0368">Histidine biosynthesis</keyword>
<keyword id="KW-0663">Pyridoxal phosphate</keyword>
<keyword id="KW-1185">Reference proteome</keyword>
<keyword id="KW-0808">Transferase</keyword>